<proteinExistence type="evidence at transcript level"/>
<dbReference type="EMBL" id="AF505881">
    <property type="protein sequence ID" value="AAM33337.1"/>
    <property type="molecule type" value="mRNA"/>
</dbReference>
<dbReference type="RefSeq" id="NP_989584.1">
    <property type="nucleotide sequence ID" value="NM_204253.2"/>
</dbReference>
<dbReference type="SMR" id="P59101"/>
<dbReference type="FunCoup" id="P59101">
    <property type="interactions" value="64"/>
</dbReference>
<dbReference type="STRING" id="9031.ENSGALP00000051519"/>
<dbReference type="GeneID" id="374101"/>
<dbReference type="KEGG" id="gga:374101"/>
<dbReference type="CTD" id="642658"/>
<dbReference type="VEuPathDB" id="HostDB:geneid_374101"/>
<dbReference type="InParanoid" id="P59101"/>
<dbReference type="OrthoDB" id="6106870at2759"/>
<dbReference type="PhylomeDB" id="P59101"/>
<dbReference type="PRO" id="PR:P59101"/>
<dbReference type="Proteomes" id="UP000000539">
    <property type="component" value="Chromosome 2"/>
</dbReference>
<dbReference type="Bgee" id="ENSGALG00000043433">
    <property type="expression patterns" value="Expressed in skeletal muscle tissue"/>
</dbReference>
<dbReference type="GO" id="GO:0005634">
    <property type="term" value="C:nucleus"/>
    <property type="evidence" value="ECO:0007669"/>
    <property type="project" value="UniProtKB-SubCell"/>
</dbReference>
<dbReference type="GO" id="GO:0000981">
    <property type="term" value="F:DNA-binding transcription factor activity, RNA polymerase II-specific"/>
    <property type="evidence" value="ECO:0000318"/>
    <property type="project" value="GO_Central"/>
</dbReference>
<dbReference type="GO" id="GO:0046983">
    <property type="term" value="F:protein dimerization activity"/>
    <property type="evidence" value="ECO:0007669"/>
    <property type="project" value="InterPro"/>
</dbReference>
<dbReference type="GO" id="GO:0000977">
    <property type="term" value="F:RNA polymerase II transcription regulatory region sequence-specific DNA binding"/>
    <property type="evidence" value="ECO:0000318"/>
    <property type="project" value="GO_Central"/>
</dbReference>
<dbReference type="GO" id="GO:0071773">
    <property type="term" value="P:cellular response to BMP stimulus"/>
    <property type="evidence" value="ECO:0000270"/>
    <property type="project" value="UniProtKB"/>
</dbReference>
<dbReference type="GO" id="GO:0044344">
    <property type="term" value="P:cellular response to fibroblast growth factor stimulus"/>
    <property type="evidence" value="ECO:0000270"/>
    <property type="project" value="UniProtKB"/>
</dbReference>
<dbReference type="GO" id="GO:0032502">
    <property type="term" value="P:developmental process"/>
    <property type="evidence" value="ECO:0000318"/>
    <property type="project" value="GO_Central"/>
</dbReference>
<dbReference type="GO" id="GO:0006357">
    <property type="term" value="P:regulation of transcription by RNA polymerase II"/>
    <property type="evidence" value="ECO:0000318"/>
    <property type="project" value="GO_Central"/>
</dbReference>
<dbReference type="GO" id="GO:0061056">
    <property type="term" value="P:sclerotome development"/>
    <property type="evidence" value="ECO:0000270"/>
    <property type="project" value="UniProtKB"/>
</dbReference>
<dbReference type="GO" id="GO:0035989">
    <property type="term" value="P:tendon development"/>
    <property type="evidence" value="ECO:0000270"/>
    <property type="project" value="UniProtKB"/>
</dbReference>
<dbReference type="CDD" id="cd18951">
    <property type="entry name" value="bHLH_TS_scleraxis"/>
    <property type="match status" value="1"/>
</dbReference>
<dbReference type="FunFam" id="4.10.280.10:FF:000010">
    <property type="entry name" value="Scleraxis bHLH transcription factor"/>
    <property type="match status" value="1"/>
</dbReference>
<dbReference type="Gene3D" id="4.10.280.10">
    <property type="entry name" value="Helix-loop-helix DNA-binding domain"/>
    <property type="match status" value="1"/>
</dbReference>
<dbReference type="InterPro" id="IPR011598">
    <property type="entry name" value="bHLH_dom"/>
</dbReference>
<dbReference type="InterPro" id="IPR050283">
    <property type="entry name" value="E-box_TF_Regulators"/>
</dbReference>
<dbReference type="InterPro" id="IPR036638">
    <property type="entry name" value="HLH_DNA-bd_sf"/>
</dbReference>
<dbReference type="PANTHER" id="PTHR23349:SF5">
    <property type="entry name" value="BASIC HELIX-LOOP-HELIX TRANSCRIPTION FACTOR SCLERAXIS"/>
    <property type="match status" value="1"/>
</dbReference>
<dbReference type="PANTHER" id="PTHR23349">
    <property type="entry name" value="BASIC HELIX-LOOP-HELIX TRANSCRIPTION FACTOR, TWIST"/>
    <property type="match status" value="1"/>
</dbReference>
<dbReference type="Pfam" id="PF00010">
    <property type="entry name" value="HLH"/>
    <property type="match status" value="1"/>
</dbReference>
<dbReference type="SMART" id="SM00353">
    <property type="entry name" value="HLH"/>
    <property type="match status" value="1"/>
</dbReference>
<dbReference type="SUPFAM" id="SSF47459">
    <property type="entry name" value="HLH, helix-loop-helix DNA-binding domain"/>
    <property type="match status" value="1"/>
</dbReference>
<dbReference type="PROSITE" id="PS50888">
    <property type="entry name" value="BHLH"/>
    <property type="match status" value="1"/>
</dbReference>
<keyword id="KW-0010">Activator</keyword>
<keyword id="KW-0217">Developmental protein</keyword>
<keyword id="KW-0238">DNA-binding</keyword>
<keyword id="KW-0539">Nucleus</keyword>
<keyword id="KW-1185">Reference proteome</keyword>
<keyword id="KW-0804">Transcription</keyword>
<keyword id="KW-0805">Transcription regulation</keyword>
<organism>
    <name type="scientific">Gallus gallus</name>
    <name type="common">Chicken</name>
    <dbReference type="NCBI Taxonomy" id="9031"/>
    <lineage>
        <taxon>Eukaryota</taxon>
        <taxon>Metazoa</taxon>
        <taxon>Chordata</taxon>
        <taxon>Craniata</taxon>
        <taxon>Vertebrata</taxon>
        <taxon>Euteleostomi</taxon>
        <taxon>Archelosauria</taxon>
        <taxon>Archosauria</taxon>
        <taxon>Dinosauria</taxon>
        <taxon>Saurischia</taxon>
        <taxon>Theropoda</taxon>
        <taxon>Coelurosauria</taxon>
        <taxon>Aves</taxon>
        <taxon>Neognathae</taxon>
        <taxon>Galloanserae</taxon>
        <taxon>Galliformes</taxon>
        <taxon>Phasianidae</taxon>
        <taxon>Phasianinae</taxon>
        <taxon>Gallus</taxon>
    </lineage>
</organism>
<comment type="function">
    <text>Plays an early essential role in mesoderm formation, as well as a later role in formation of somite-derived chondrogenic lineages.</text>
</comment>
<comment type="subunit">
    <text>Efficient DNA binding requires dimerization with another bHLH protein. Dimerizes and binds the E-box consensus sequence with E12.</text>
</comment>
<comment type="subcellular location">
    <subcellularLocation>
        <location evidence="1">Nucleus</location>
    </subcellularLocation>
</comment>
<comment type="tissue specificity">
    <text>Expressed in the intersomitic, the superficial proximomedial limb mesenchyme and the subectodermal mesenchyme.</text>
</comment>
<comment type="developmental stage">
    <text>At stage 21, expressed in leg buds in a superficial proximomedial domain, expression is enhanced by stage 23. By stage 29, expression is elaborated to include both leg and wing. By stage 35, expressed in all muscle-to-bone attachment sites. Expressed also in a wing aponeurosis, a tendinous element arranged in flattened bands, and in some of the flattened sheets of connective tissue associated with muscle.</text>
</comment>
<sequence>MSFAMLRPAAGRYLYPEISMLSEDEENGSESSGSDEKPFHLDADGFGIKAGKRRSGKKAGRLHREPRQRHTANARERDRTNSVNTAFTALRTLIPTEPADRKLSKIETLRLASSYISHLGNVLLVGEACGDGQPCHTSPAFFHHGGGGGSPPPRDSENSQPKQICTFCLSNQRKLSKDRDRKTAIRS</sequence>
<protein>
    <recommendedName>
        <fullName>Basic helix-loop-helix transcription factor scleraxis</fullName>
    </recommendedName>
</protein>
<feature type="chain" id="PRO_0000127437" description="Basic helix-loop-helix transcription factor scleraxis">
    <location>
        <begin position="1"/>
        <end position="187"/>
    </location>
</feature>
<feature type="domain" description="bHLH" evidence="1">
    <location>
        <begin position="67"/>
        <end position="119"/>
    </location>
</feature>
<feature type="region of interest" description="Disordered" evidence="2">
    <location>
        <begin position="21"/>
        <end position="83"/>
    </location>
</feature>
<feature type="region of interest" description="Disordered" evidence="2">
    <location>
        <begin position="140"/>
        <end position="163"/>
    </location>
</feature>
<feature type="compositionally biased region" description="Basic and acidic residues" evidence="2">
    <location>
        <begin position="34"/>
        <end position="43"/>
    </location>
</feature>
<feature type="compositionally biased region" description="Basic residues" evidence="2">
    <location>
        <begin position="50"/>
        <end position="72"/>
    </location>
</feature>
<gene>
    <name type="primary">SCX</name>
</gene>
<name>SCX_CHICK</name>
<evidence type="ECO:0000255" key="1">
    <source>
        <dbReference type="PROSITE-ProRule" id="PRU00981"/>
    </source>
</evidence>
<evidence type="ECO:0000256" key="2">
    <source>
        <dbReference type="SAM" id="MobiDB-lite"/>
    </source>
</evidence>
<reference key="1">
    <citation type="journal article" date="2001" name="Development">
        <title>Analysis of the tendon cell fate using Scleraxis, a specific marker for tendons and ligaments.</title>
        <authorList>
            <person name="Schweitzer R."/>
            <person name="Chyung J.H."/>
            <person name="Murtaugh L.C."/>
            <person name="Brent A.E."/>
            <person name="Rosen V."/>
            <person name="Olson E.N."/>
            <person name="Lassar A."/>
            <person name="Tabin C.J."/>
        </authorList>
    </citation>
    <scope>NUCLEOTIDE SEQUENCE [MRNA]</scope>
</reference>
<accession>P59101</accession>